<sequence length="136" mass="15621">MGIKDIDIKENFGKIVQNMDLKFRKIDDKELLIAIAIDKYKNVLMTAFMDKESLKMTLKTGLMHYFSTSRNKIWMKGEESKNVQKVLEVFKDCDGDALLFIVEQTGWACHEGYMSCFHNKVDLNTGNSTVIGDKLD</sequence>
<accession>A6URR6</accession>
<organism>
    <name type="scientific">Methanococcus vannielii (strain ATCC 35089 / DSM 1224 / JCM 13029 / OCM 148 / SB)</name>
    <dbReference type="NCBI Taxonomy" id="406327"/>
    <lineage>
        <taxon>Archaea</taxon>
        <taxon>Methanobacteriati</taxon>
        <taxon>Methanobacteriota</taxon>
        <taxon>Methanomada group</taxon>
        <taxon>Methanococci</taxon>
        <taxon>Methanococcales</taxon>
        <taxon>Methanococcaceae</taxon>
        <taxon>Methanococcus</taxon>
    </lineage>
</organism>
<proteinExistence type="inferred from homology"/>
<feature type="chain" id="PRO_1000063411" description="Phosphoribosyl-AMP cyclohydrolase">
    <location>
        <begin position="1"/>
        <end position="136"/>
    </location>
</feature>
<feature type="binding site" evidence="1">
    <location>
        <position position="92"/>
    </location>
    <ligand>
        <name>Mg(2+)</name>
        <dbReference type="ChEBI" id="CHEBI:18420"/>
    </ligand>
</feature>
<feature type="binding site" evidence="1">
    <location>
        <position position="93"/>
    </location>
    <ligand>
        <name>Zn(2+)</name>
        <dbReference type="ChEBI" id="CHEBI:29105"/>
        <note>ligand shared between dimeric partners</note>
    </ligand>
</feature>
<feature type="binding site" evidence="1">
    <location>
        <position position="94"/>
    </location>
    <ligand>
        <name>Mg(2+)</name>
        <dbReference type="ChEBI" id="CHEBI:18420"/>
    </ligand>
</feature>
<feature type="binding site" evidence="1">
    <location>
        <position position="96"/>
    </location>
    <ligand>
        <name>Mg(2+)</name>
        <dbReference type="ChEBI" id="CHEBI:18420"/>
    </ligand>
</feature>
<feature type="binding site" evidence="1">
    <location>
        <position position="109"/>
    </location>
    <ligand>
        <name>Zn(2+)</name>
        <dbReference type="ChEBI" id="CHEBI:29105"/>
        <note>ligand shared between dimeric partners</note>
    </ligand>
</feature>
<feature type="binding site" evidence="1">
    <location>
        <position position="116"/>
    </location>
    <ligand>
        <name>Zn(2+)</name>
        <dbReference type="ChEBI" id="CHEBI:29105"/>
        <note>ligand shared between dimeric partners</note>
    </ligand>
</feature>
<protein>
    <recommendedName>
        <fullName evidence="1">Phosphoribosyl-AMP cyclohydrolase</fullName>
        <shortName evidence="1">PRA-CH</shortName>
        <ecNumber evidence="1">3.5.4.19</ecNumber>
    </recommendedName>
</protein>
<reference key="1">
    <citation type="submission" date="2007-06" db="EMBL/GenBank/DDBJ databases">
        <title>Complete sequence of Methanococcus vannielii SB.</title>
        <authorList>
            <consortium name="US DOE Joint Genome Institute"/>
            <person name="Copeland A."/>
            <person name="Lucas S."/>
            <person name="Lapidus A."/>
            <person name="Barry K."/>
            <person name="Glavina del Rio T."/>
            <person name="Dalin E."/>
            <person name="Tice H."/>
            <person name="Pitluck S."/>
            <person name="Chain P."/>
            <person name="Malfatti S."/>
            <person name="Shin M."/>
            <person name="Vergez L."/>
            <person name="Schmutz J."/>
            <person name="Larimer F."/>
            <person name="Land M."/>
            <person name="Hauser L."/>
            <person name="Kyrpides N."/>
            <person name="Anderson I."/>
            <person name="Sieprawska-Lupa M."/>
            <person name="Whitman W.B."/>
            <person name="Richardson P."/>
        </authorList>
    </citation>
    <scope>NUCLEOTIDE SEQUENCE [LARGE SCALE GENOMIC DNA]</scope>
    <source>
        <strain>ATCC 35089 / DSM 1224 / JCM 13029 / OCM 148 / SB</strain>
    </source>
</reference>
<keyword id="KW-0028">Amino-acid biosynthesis</keyword>
<keyword id="KW-0963">Cytoplasm</keyword>
<keyword id="KW-0368">Histidine biosynthesis</keyword>
<keyword id="KW-0378">Hydrolase</keyword>
<keyword id="KW-0460">Magnesium</keyword>
<keyword id="KW-0479">Metal-binding</keyword>
<keyword id="KW-0862">Zinc</keyword>
<name>HIS3_METVS</name>
<comment type="function">
    <text evidence="1">Catalyzes the hydrolysis of the adenine ring of phosphoribosyl-AMP.</text>
</comment>
<comment type="catalytic activity">
    <reaction evidence="1">
        <text>1-(5-phospho-beta-D-ribosyl)-5'-AMP + H2O = 1-(5-phospho-beta-D-ribosyl)-5-[(5-phospho-beta-D-ribosylamino)methylideneamino]imidazole-4-carboxamide</text>
        <dbReference type="Rhea" id="RHEA:20049"/>
        <dbReference type="ChEBI" id="CHEBI:15377"/>
        <dbReference type="ChEBI" id="CHEBI:58435"/>
        <dbReference type="ChEBI" id="CHEBI:59457"/>
        <dbReference type="EC" id="3.5.4.19"/>
    </reaction>
</comment>
<comment type="cofactor">
    <cofactor evidence="1">
        <name>Mg(2+)</name>
        <dbReference type="ChEBI" id="CHEBI:18420"/>
    </cofactor>
    <text evidence="1">Binds 1 Mg(2+) ion per subunit.</text>
</comment>
<comment type="cofactor">
    <cofactor evidence="1">
        <name>Zn(2+)</name>
        <dbReference type="ChEBI" id="CHEBI:29105"/>
    </cofactor>
    <text evidence="1">Binds 1 zinc ion per subunit.</text>
</comment>
<comment type="pathway">
    <text evidence="1">Amino-acid biosynthesis; L-histidine biosynthesis; L-histidine from 5-phospho-alpha-D-ribose 1-diphosphate: step 3/9.</text>
</comment>
<comment type="subunit">
    <text evidence="1">Homodimer.</text>
</comment>
<comment type="subcellular location">
    <subcellularLocation>
        <location evidence="1">Cytoplasm</location>
    </subcellularLocation>
</comment>
<comment type="similarity">
    <text evidence="1">Belongs to the PRA-CH family.</text>
</comment>
<evidence type="ECO:0000255" key="1">
    <source>
        <dbReference type="HAMAP-Rule" id="MF_01021"/>
    </source>
</evidence>
<gene>
    <name evidence="1" type="primary">hisI</name>
    <name type="ordered locus">Mevan_1291</name>
</gene>
<dbReference type="EC" id="3.5.4.19" evidence="1"/>
<dbReference type="EMBL" id="CP000742">
    <property type="protein sequence ID" value="ABR55188.1"/>
    <property type="molecule type" value="Genomic_DNA"/>
</dbReference>
<dbReference type="RefSeq" id="WP_012066103.1">
    <property type="nucleotide sequence ID" value="NC_009634.1"/>
</dbReference>
<dbReference type="SMR" id="A6URR6"/>
<dbReference type="STRING" id="406327.Mevan_1291"/>
<dbReference type="GeneID" id="5324753"/>
<dbReference type="KEGG" id="mvn:Mevan_1291"/>
<dbReference type="eggNOG" id="arCOG02676">
    <property type="taxonomic scope" value="Archaea"/>
</dbReference>
<dbReference type="HOGENOM" id="CLU_048577_5_0_2"/>
<dbReference type="OrthoDB" id="5853at2157"/>
<dbReference type="UniPathway" id="UPA00031">
    <property type="reaction ID" value="UER00008"/>
</dbReference>
<dbReference type="Proteomes" id="UP000001107">
    <property type="component" value="Chromosome"/>
</dbReference>
<dbReference type="GO" id="GO:0005737">
    <property type="term" value="C:cytoplasm"/>
    <property type="evidence" value="ECO:0007669"/>
    <property type="project" value="UniProtKB-SubCell"/>
</dbReference>
<dbReference type="GO" id="GO:0000287">
    <property type="term" value="F:magnesium ion binding"/>
    <property type="evidence" value="ECO:0007669"/>
    <property type="project" value="UniProtKB-UniRule"/>
</dbReference>
<dbReference type="GO" id="GO:0004635">
    <property type="term" value="F:phosphoribosyl-AMP cyclohydrolase activity"/>
    <property type="evidence" value="ECO:0007669"/>
    <property type="project" value="UniProtKB-UniRule"/>
</dbReference>
<dbReference type="GO" id="GO:0008270">
    <property type="term" value="F:zinc ion binding"/>
    <property type="evidence" value="ECO:0007669"/>
    <property type="project" value="UniProtKB-UniRule"/>
</dbReference>
<dbReference type="GO" id="GO:0000105">
    <property type="term" value="P:L-histidine biosynthetic process"/>
    <property type="evidence" value="ECO:0007669"/>
    <property type="project" value="UniProtKB-UniRule"/>
</dbReference>
<dbReference type="FunFam" id="3.10.20.810:FF:000001">
    <property type="entry name" value="Histidine biosynthesis bifunctional protein HisIE"/>
    <property type="match status" value="1"/>
</dbReference>
<dbReference type="Gene3D" id="3.10.20.810">
    <property type="entry name" value="Phosphoribosyl-AMP cyclohydrolase"/>
    <property type="match status" value="1"/>
</dbReference>
<dbReference type="HAMAP" id="MF_01021">
    <property type="entry name" value="HisI"/>
    <property type="match status" value="1"/>
</dbReference>
<dbReference type="InterPro" id="IPR026660">
    <property type="entry name" value="PRA-CH"/>
</dbReference>
<dbReference type="InterPro" id="IPR002496">
    <property type="entry name" value="PRib_AMP_CycHydrolase_dom"/>
</dbReference>
<dbReference type="InterPro" id="IPR038019">
    <property type="entry name" value="PRib_AMP_CycHydrolase_sf"/>
</dbReference>
<dbReference type="NCBIfam" id="NF000768">
    <property type="entry name" value="PRK00051.1"/>
    <property type="match status" value="1"/>
</dbReference>
<dbReference type="PANTHER" id="PTHR42945">
    <property type="entry name" value="HISTIDINE BIOSYNTHESIS BIFUNCTIONAL PROTEIN"/>
    <property type="match status" value="1"/>
</dbReference>
<dbReference type="PANTHER" id="PTHR42945:SF1">
    <property type="entry name" value="HISTIDINE BIOSYNTHESIS BIFUNCTIONAL PROTEIN HIS7"/>
    <property type="match status" value="1"/>
</dbReference>
<dbReference type="Pfam" id="PF01502">
    <property type="entry name" value="PRA-CH"/>
    <property type="match status" value="1"/>
</dbReference>
<dbReference type="SUPFAM" id="SSF141734">
    <property type="entry name" value="HisI-like"/>
    <property type="match status" value="1"/>
</dbReference>